<proteinExistence type="inferred from homology"/>
<name>ARGB_STAA2</name>
<accession>A6TXW6</accession>
<reference key="1">
    <citation type="submission" date="2007-06" db="EMBL/GenBank/DDBJ databases">
        <title>Complete sequence of chromosome of Staphylococcus aureus subsp. aureus JH1.</title>
        <authorList>
            <consortium name="US DOE Joint Genome Institute"/>
            <person name="Copeland A."/>
            <person name="Lucas S."/>
            <person name="Lapidus A."/>
            <person name="Barry K."/>
            <person name="Detter J.C."/>
            <person name="Glavina del Rio T."/>
            <person name="Hammon N."/>
            <person name="Israni S."/>
            <person name="Dalin E."/>
            <person name="Tice H."/>
            <person name="Pitluck S."/>
            <person name="Chain P."/>
            <person name="Malfatti S."/>
            <person name="Shin M."/>
            <person name="Vergez L."/>
            <person name="Schmutz J."/>
            <person name="Larimer F."/>
            <person name="Land M."/>
            <person name="Hauser L."/>
            <person name="Kyrpides N."/>
            <person name="Ivanova N."/>
            <person name="Tomasz A."/>
            <person name="Richardson P."/>
        </authorList>
    </citation>
    <scope>NUCLEOTIDE SEQUENCE [LARGE SCALE GENOMIC DNA]</scope>
    <source>
        <strain>JH1</strain>
    </source>
</reference>
<evidence type="ECO:0000255" key="1">
    <source>
        <dbReference type="HAMAP-Rule" id="MF_00082"/>
    </source>
</evidence>
<dbReference type="EC" id="2.7.2.8" evidence="1"/>
<dbReference type="EMBL" id="CP000736">
    <property type="protein sequence ID" value="ABR51034.1"/>
    <property type="molecule type" value="Genomic_DNA"/>
</dbReference>
<dbReference type="SMR" id="A6TXW6"/>
<dbReference type="KEGG" id="sah:SaurJH1_0172"/>
<dbReference type="HOGENOM" id="CLU_053680_1_0_9"/>
<dbReference type="UniPathway" id="UPA00068">
    <property type="reaction ID" value="UER00107"/>
</dbReference>
<dbReference type="GO" id="GO:0005737">
    <property type="term" value="C:cytoplasm"/>
    <property type="evidence" value="ECO:0007669"/>
    <property type="project" value="UniProtKB-SubCell"/>
</dbReference>
<dbReference type="GO" id="GO:0003991">
    <property type="term" value="F:acetylglutamate kinase activity"/>
    <property type="evidence" value="ECO:0007669"/>
    <property type="project" value="UniProtKB-UniRule"/>
</dbReference>
<dbReference type="GO" id="GO:0005524">
    <property type="term" value="F:ATP binding"/>
    <property type="evidence" value="ECO:0007669"/>
    <property type="project" value="UniProtKB-UniRule"/>
</dbReference>
<dbReference type="GO" id="GO:0042450">
    <property type="term" value="P:arginine biosynthetic process via ornithine"/>
    <property type="evidence" value="ECO:0007669"/>
    <property type="project" value="UniProtKB-UniRule"/>
</dbReference>
<dbReference type="GO" id="GO:0006526">
    <property type="term" value="P:L-arginine biosynthetic process"/>
    <property type="evidence" value="ECO:0007669"/>
    <property type="project" value="UniProtKB-UniPathway"/>
</dbReference>
<dbReference type="CDD" id="cd04238">
    <property type="entry name" value="AAK_NAGK-like"/>
    <property type="match status" value="1"/>
</dbReference>
<dbReference type="FunFam" id="3.40.1160.10:FF:000037">
    <property type="entry name" value="Acetylglutamate kinase"/>
    <property type="match status" value="1"/>
</dbReference>
<dbReference type="Gene3D" id="3.40.1160.10">
    <property type="entry name" value="Acetylglutamate kinase-like"/>
    <property type="match status" value="1"/>
</dbReference>
<dbReference type="HAMAP" id="MF_00082">
    <property type="entry name" value="ArgB"/>
    <property type="match status" value="1"/>
</dbReference>
<dbReference type="InterPro" id="IPR036393">
    <property type="entry name" value="AceGlu_kinase-like_sf"/>
</dbReference>
<dbReference type="InterPro" id="IPR004662">
    <property type="entry name" value="AcgluKinase_fam"/>
</dbReference>
<dbReference type="InterPro" id="IPR037528">
    <property type="entry name" value="ArgB"/>
</dbReference>
<dbReference type="InterPro" id="IPR001048">
    <property type="entry name" value="Asp/Glu/Uridylate_kinase"/>
</dbReference>
<dbReference type="NCBIfam" id="TIGR00761">
    <property type="entry name" value="argB"/>
    <property type="match status" value="1"/>
</dbReference>
<dbReference type="PANTHER" id="PTHR23342">
    <property type="entry name" value="N-ACETYLGLUTAMATE SYNTHASE"/>
    <property type="match status" value="1"/>
</dbReference>
<dbReference type="PANTHER" id="PTHR23342:SF0">
    <property type="entry name" value="N-ACETYLGLUTAMATE SYNTHASE, MITOCHONDRIAL"/>
    <property type="match status" value="1"/>
</dbReference>
<dbReference type="Pfam" id="PF00696">
    <property type="entry name" value="AA_kinase"/>
    <property type="match status" value="1"/>
</dbReference>
<dbReference type="PIRSF" id="PIRSF000728">
    <property type="entry name" value="NAGK"/>
    <property type="match status" value="1"/>
</dbReference>
<dbReference type="SUPFAM" id="SSF53633">
    <property type="entry name" value="Carbamate kinase-like"/>
    <property type="match status" value="1"/>
</dbReference>
<keyword id="KW-0028">Amino-acid biosynthesis</keyword>
<keyword id="KW-0055">Arginine biosynthesis</keyword>
<keyword id="KW-0067">ATP-binding</keyword>
<keyword id="KW-0963">Cytoplasm</keyword>
<keyword id="KW-0418">Kinase</keyword>
<keyword id="KW-0547">Nucleotide-binding</keyword>
<keyword id="KW-0808">Transferase</keyword>
<feature type="chain" id="PRO_1000075321" description="Acetylglutamate kinase">
    <location>
        <begin position="1"/>
        <end position="254"/>
    </location>
</feature>
<feature type="binding site" evidence="1">
    <location>
        <begin position="40"/>
        <end position="41"/>
    </location>
    <ligand>
        <name>substrate</name>
    </ligand>
</feature>
<feature type="binding site" evidence="1">
    <location>
        <position position="62"/>
    </location>
    <ligand>
        <name>substrate</name>
    </ligand>
</feature>
<feature type="binding site" evidence="1">
    <location>
        <position position="154"/>
    </location>
    <ligand>
        <name>substrate</name>
    </ligand>
</feature>
<feature type="site" description="Transition state stabilizer" evidence="1">
    <location>
        <position position="7"/>
    </location>
</feature>
<feature type="site" description="Transition state stabilizer" evidence="1">
    <location>
        <position position="212"/>
    </location>
</feature>
<comment type="function">
    <text evidence="1">Catalyzes the ATP-dependent phosphorylation of N-acetyl-L-glutamate.</text>
</comment>
<comment type="catalytic activity">
    <reaction evidence="1">
        <text>N-acetyl-L-glutamate + ATP = N-acetyl-L-glutamyl 5-phosphate + ADP</text>
        <dbReference type="Rhea" id="RHEA:14629"/>
        <dbReference type="ChEBI" id="CHEBI:30616"/>
        <dbReference type="ChEBI" id="CHEBI:44337"/>
        <dbReference type="ChEBI" id="CHEBI:57936"/>
        <dbReference type="ChEBI" id="CHEBI:456216"/>
        <dbReference type="EC" id="2.7.2.8"/>
    </reaction>
</comment>
<comment type="pathway">
    <text evidence="1">Amino-acid biosynthesis; L-arginine biosynthesis; N(2)-acetyl-L-ornithine from L-glutamate: step 2/4.</text>
</comment>
<comment type="subcellular location">
    <subcellularLocation>
        <location evidence="1">Cytoplasm</location>
    </subcellularLocation>
</comment>
<comment type="similarity">
    <text evidence="1">Belongs to the acetylglutamate kinase family. ArgB subfamily.</text>
</comment>
<sequence>MKFIVIKIGGSTLSDMHPSIINNIKHLRSNNIYPIIVHGGGPFINEALSNQQIEPHFVNGLRVTDKATMTITKHTLIADVNTALVAQFNQHQCSAIGLCGLDAQLFEITSFDQQYGYVGVPTALNKDALQYLCTKFVPIINSIGFNNHDGEFYNINADTLAYFIASSLKAPIYVLSNIAGVLINDVVIPQLPLVDIHQYIEHGDIYGGMIPKVLDAKNAIENGCPKVIIASGNKPNIIESIYNNDFVGTTILNS</sequence>
<organism>
    <name type="scientific">Staphylococcus aureus (strain JH1)</name>
    <dbReference type="NCBI Taxonomy" id="359787"/>
    <lineage>
        <taxon>Bacteria</taxon>
        <taxon>Bacillati</taxon>
        <taxon>Bacillota</taxon>
        <taxon>Bacilli</taxon>
        <taxon>Bacillales</taxon>
        <taxon>Staphylococcaceae</taxon>
        <taxon>Staphylococcus</taxon>
    </lineage>
</organism>
<protein>
    <recommendedName>
        <fullName evidence="1">Acetylglutamate kinase</fullName>
        <ecNumber evidence="1">2.7.2.8</ecNumber>
    </recommendedName>
    <alternativeName>
        <fullName evidence="1">N-acetyl-L-glutamate 5-phosphotransferase</fullName>
    </alternativeName>
    <alternativeName>
        <fullName evidence="1">NAG kinase</fullName>
        <shortName evidence="1">NAGK</shortName>
    </alternativeName>
</protein>
<gene>
    <name evidence="1" type="primary">argB</name>
    <name type="ordered locus">SaurJH1_0172</name>
</gene>